<name>DEGPL_BRUA2</name>
<sequence>MSRARISNYRKGVAAVALSAALAGAFVVTGPLGALNEARAEAVHVTPPPQAGFADLVEKVRPAVVSVRVKKDVQETSNRGPQFFGPPGFDQLPDGHPLKRFFRDFGMEPRGDSRSDNRRGKANKPRPGHERPVAQGSGFVISEDGYVVTNNHVVSDGDAYTVVLDDGTELDAKLIGADPRTDLAVLKINAPKRKFVYVAFGDDNKVRVGDWVVAVGNPFGLGGTVTSGIVSARGRDIGAGPYDDFIQIDAAVNKGNSGGPAFDLSGEVIGINTAIFSPSGGSVGIAFAIPSSTAKQVVDQLIKKGSVERGWIGVQIQPVTKDIAASLGLAEEKGAIVASPQDDGPAAKAGIKAGDVITAVNGETVQDPRDLARKVANIAPGEKAALTVWRKNKAEEINVTIAAMPNDKGKSGSQSNDNDGGQGETLDSYGLTVVPSEDGKGVVVTDVDPDSDAADRGIRSGDVIVSVNNQTVKTAGDINKAITAAEKSGRKAVLLQLQSNDQSRFVALPINQE</sequence>
<protein>
    <recommendedName>
        <fullName>Probable periplasmic serine endoprotease DegP-like</fullName>
        <ecNumber>3.4.21.107</ecNumber>
    </recommendedName>
    <alternativeName>
        <fullName>Protease Do</fullName>
    </alternativeName>
</protein>
<proteinExistence type="inferred from homology"/>
<evidence type="ECO:0000250" key="1"/>
<evidence type="ECO:0000255" key="2"/>
<evidence type="ECO:0000255" key="3">
    <source>
        <dbReference type="PROSITE-ProRule" id="PRU00143"/>
    </source>
</evidence>
<evidence type="ECO:0000256" key="4">
    <source>
        <dbReference type="SAM" id="MobiDB-lite"/>
    </source>
</evidence>
<evidence type="ECO:0000305" key="5"/>
<comment type="function">
    <text evidence="1">Might be efficient in the degradation of transiently denatured and unfolded proteins which accumulate in the periplasm following stress conditions.</text>
</comment>
<comment type="catalytic activity">
    <reaction>
        <text>Acts on substrates that are at least partially unfolded. The cleavage site P1 residue is normally between a pair of hydrophobic residues, such as Val-|-Val.</text>
        <dbReference type="EC" id="3.4.21.107"/>
    </reaction>
</comment>
<comment type="subcellular location">
    <subcellularLocation>
        <location evidence="5">Periplasm</location>
    </subcellularLocation>
</comment>
<comment type="similarity">
    <text evidence="5">Belongs to the peptidase S1C family.</text>
</comment>
<organism>
    <name type="scientific">Brucella abortus (strain 2308)</name>
    <dbReference type="NCBI Taxonomy" id="359391"/>
    <lineage>
        <taxon>Bacteria</taxon>
        <taxon>Pseudomonadati</taxon>
        <taxon>Pseudomonadota</taxon>
        <taxon>Alphaproteobacteria</taxon>
        <taxon>Hyphomicrobiales</taxon>
        <taxon>Brucellaceae</taxon>
        <taxon>Brucella/Ochrobactrum group</taxon>
        <taxon>Brucella</taxon>
    </lineage>
</organism>
<reference key="1">
    <citation type="journal article" date="1994" name="Microb. Pathog.">
        <title>Cloning, characterization and construction of htrA and htrA-like mutants of Brucella abortus and their survival in BALB/c mice.</title>
        <authorList>
            <person name="Tatum F.M."/>
            <person name="Cheville N.F."/>
            <person name="Morfitt D."/>
        </authorList>
    </citation>
    <scope>NUCLEOTIDE SEQUENCE [GENOMIC DNA]</scope>
    <source>
        <strain>2308</strain>
    </source>
</reference>
<reference key="2">
    <citation type="journal article" date="2005" name="Infect. Immun.">
        <title>Whole-genome analyses of speciation events in pathogenic Brucellae.</title>
        <authorList>
            <person name="Chain P.S."/>
            <person name="Comerci D.J."/>
            <person name="Tolmasky M.E."/>
            <person name="Larimer F.W."/>
            <person name="Malfatti S.A."/>
            <person name="Vergez L.M."/>
            <person name="Aguero F."/>
            <person name="Land M.L."/>
            <person name="Ugalde R.A."/>
            <person name="Garcia E."/>
        </authorList>
    </citation>
    <scope>NUCLEOTIDE SEQUENCE [LARGE SCALE GENOMIC DNA]</scope>
    <source>
        <strain>2308</strain>
    </source>
</reference>
<dbReference type="EC" id="3.4.21.107"/>
<dbReference type="EMBL" id="U07352">
    <property type="protein sequence ID" value="AAA70164.1"/>
    <property type="molecule type" value="Genomic_DNA"/>
</dbReference>
<dbReference type="EMBL" id="AM040264">
    <property type="protein sequence ID" value="CAJ10591.1"/>
    <property type="molecule type" value="Genomic_DNA"/>
</dbReference>
<dbReference type="PIR" id="I40060">
    <property type="entry name" value="I40060"/>
</dbReference>
<dbReference type="RefSeq" id="WP_002963760.1">
    <property type="nucleotide sequence ID" value="NZ_KN046823.1"/>
</dbReference>
<dbReference type="SMR" id="Q2YMX6"/>
<dbReference type="STRING" id="359391.BAB1_0635"/>
<dbReference type="KEGG" id="bmf:BAB1_0635"/>
<dbReference type="PATRIC" id="fig|359391.11.peg.2948"/>
<dbReference type="HOGENOM" id="CLU_020120_1_0_5"/>
<dbReference type="PhylomeDB" id="Q2YMX6"/>
<dbReference type="Proteomes" id="UP000002719">
    <property type="component" value="Chromosome I"/>
</dbReference>
<dbReference type="GO" id="GO:0030288">
    <property type="term" value="C:outer membrane-bounded periplasmic space"/>
    <property type="evidence" value="ECO:0000250"/>
    <property type="project" value="UniProtKB"/>
</dbReference>
<dbReference type="GO" id="GO:0004252">
    <property type="term" value="F:serine-type endopeptidase activity"/>
    <property type="evidence" value="ECO:0000250"/>
    <property type="project" value="UniProtKB"/>
</dbReference>
<dbReference type="GO" id="GO:0006508">
    <property type="term" value="P:proteolysis"/>
    <property type="evidence" value="ECO:0007669"/>
    <property type="project" value="UniProtKB-KW"/>
</dbReference>
<dbReference type="CDD" id="cd10839">
    <property type="entry name" value="cpPDZ1_DegP-like"/>
    <property type="match status" value="1"/>
</dbReference>
<dbReference type="CDD" id="cd23084">
    <property type="entry name" value="cpPDZ2_DegP-like"/>
    <property type="match status" value="1"/>
</dbReference>
<dbReference type="FunFam" id="2.30.42.10:FF:000037">
    <property type="entry name" value="Periplasmic serine endoprotease DegP-like"/>
    <property type="match status" value="1"/>
</dbReference>
<dbReference type="FunFam" id="2.30.42.10:FF:000197">
    <property type="entry name" value="Periplasmic serine endoprotease DegP-like"/>
    <property type="match status" value="1"/>
</dbReference>
<dbReference type="FunFam" id="2.40.10.120:FF:000007">
    <property type="entry name" value="Periplasmic serine endoprotease DegP-like"/>
    <property type="match status" value="1"/>
</dbReference>
<dbReference type="Gene3D" id="2.30.42.10">
    <property type="match status" value="2"/>
</dbReference>
<dbReference type="Gene3D" id="2.40.10.120">
    <property type="match status" value="1"/>
</dbReference>
<dbReference type="InterPro" id="IPR001478">
    <property type="entry name" value="PDZ"/>
</dbReference>
<dbReference type="InterPro" id="IPR036034">
    <property type="entry name" value="PDZ_sf"/>
</dbReference>
<dbReference type="InterPro" id="IPR011782">
    <property type="entry name" value="Pept_S1C_Do"/>
</dbReference>
<dbReference type="InterPro" id="IPR009003">
    <property type="entry name" value="Peptidase_S1_PA"/>
</dbReference>
<dbReference type="InterPro" id="IPR001940">
    <property type="entry name" value="Peptidase_S1C"/>
</dbReference>
<dbReference type="NCBIfam" id="TIGR02037">
    <property type="entry name" value="degP_htrA_DO"/>
    <property type="match status" value="1"/>
</dbReference>
<dbReference type="PANTHER" id="PTHR22939">
    <property type="entry name" value="SERINE PROTEASE FAMILY S1C HTRA-RELATED"/>
    <property type="match status" value="1"/>
</dbReference>
<dbReference type="PANTHER" id="PTHR22939:SF129">
    <property type="entry name" value="SERINE PROTEASE HTRA2, MITOCHONDRIAL"/>
    <property type="match status" value="1"/>
</dbReference>
<dbReference type="Pfam" id="PF00595">
    <property type="entry name" value="PDZ"/>
    <property type="match status" value="1"/>
</dbReference>
<dbReference type="Pfam" id="PF13180">
    <property type="entry name" value="PDZ_2"/>
    <property type="match status" value="1"/>
</dbReference>
<dbReference type="Pfam" id="PF13365">
    <property type="entry name" value="Trypsin_2"/>
    <property type="match status" value="1"/>
</dbReference>
<dbReference type="PRINTS" id="PR00834">
    <property type="entry name" value="PROTEASES2C"/>
</dbReference>
<dbReference type="SMART" id="SM00228">
    <property type="entry name" value="PDZ"/>
    <property type="match status" value="2"/>
</dbReference>
<dbReference type="SUPFAM" id="SSF50156">
    <property type="entry name" value="PDZ domain-like"/>
    <property type="match status" value="2"/>
</dbReference>
<dbReference type="SUPFAM" id="SSF50494">
    <property type="entry name" value="Trypsin-like serine proteases"/>
    <property type="match status" value="1"/>
</dbReference>
<dbReference type="PROSITE" id="PS50106">
    <property type="entry name" value="PDZ"/>
    <property type="match status" value="2"/>
</dbReference>
<keyword id="KW-0378">Hydrolase</keyword>
<keyword id="KW-0574">Periplasm</keyword>
<keyword id="KW-0645">Protease</keyword>
<keyword id="KW-1185">Reference proteome</keyword>
<keyword id="KW-0677">Repeat</keyword>
<keyword id="KW-0720">Serine protease</keyword>
<keyword id="KW-0732">Signal</keyword>
<keyword id="KW-0346">Stress response</keyword>
<gene>
    <name type="primary">htrA</name>
    <name type="ordered locus">BAB1_0635</name>
</gene>
<accession>Q2YMX6</accession>
<accession>P0A3Z6</accession>
<accession>Q44597</accession>
<accession>Q57EC9</accession>
<feature type="signal peptide" evidence="2">
    <location>
        <begin position="1"/>
        <end position="25"/>
    </location>
</feature>
<feature type="chain" id="PRO_0000093858" description="Probable periplasmic serine endoprotease DegP-like">
    <location>
        <begin position="26"/>
        <end position="513"/>
    </location>
</feature>
<feature type="domain" description="PDZ 1" evidence="3">
    <location>
        <begin position="300"/>
        <end position="391"/>
    </location>
</feature>
<feature type="domain" description="PDZ 2" evidence="3">
    <location>
        <begin position="414"/>
        <end position="500"/>
    </location>
</feature>
<feature type="region of interest" description="Disordered" evidence="4">
    <location>
        <begin position="100"/>
        <end position="135"/>
    </location>
</feature>
<feature type="region of interest" description="Serine protease">
    <location>
        <begin position="125"/>
        <end position="299"/>
    </location>
</feature>
<feature type="region of interest" description="Disordered" evidence="4">
    <location>
        <begin position="403"/>
        <end position="428"/>
    </location>
</feature>
<feature type="compositionally biased region" description="Basic and acidic residues" evidence="4">
    <location>
        <begin position="101"/>
        <end position="119"/>
    </location>
</feature>
<feature type="active site" description="Charge relay system" evidence="2">
    <location>
        <position position="152"/>
    </location>
</feature>
<feature type="active site" description="Charge relay system" evidence="2">
    <location>
        <position position="182"/>
    </location>
</feature>
<feature type="active site" description="Charge relay system" evidence="2">
    <location>
        <position position="257"/>
    </location>
</feature>
<feature type="binding site" evidence="1">
    <location>
        <begin position="255"/>
        <end position="257"/>
    </location>
    <ligand>
        <name>substrate</name>
    </ligand>
</feature>
<feature type="binding site" evidence="1">
    <location>
        <begin position="312"/>
        <end position="316"/>
    </location>
    <ligand>
        <name>substrate</name>
    </ligand>
</feature>